<sequence>MTTFTKLSEQEAPSLSVHPTRRISKINPNIYAGFTEHMGRCIYGGIYDPGNPLSDENGFRKDVLEALKELNIPVVRYPGGNFMATYHWIDGVGPKDQRPARPELAWLGTETNQFGTDEFLKWCEVLGTEPYFCLNFGTGTLDEALAWVEYCNGTRDTYYANLRRKNGREEPYNVKYWALGNETWGPWQVEQMTKEAYAHKAYQWAKALKLLDPSLVLVLCGQDGTASWDYYTLKQCLLPLNSPLSTSAVPLIDMHSIHLYTASSDHRANATAPLAAERAIEITSSLIDLARIENGVPADQLRPTICFDEWNVWDPIRAEGSKGAEECYTLSDALAVAVYLNVFVRKSKDLGMCCIAQSVNVISPLMTTKDGITKQTTWWPLYLFSRYMRGWTISAHLSCSTYEGETSPKWVRGVKDTPWLDVSATLGEDGYVNLAVVNVHDDKGIETQLEGPSGEVSVFTVTGDNVNVTNMKGKQEVGIVESTWDGKGKYVFPKHSFTLLRWKA</sequence>
<name>ABFC_ASPTN</name>
<reference key="1">
    <citation type="submission" date="2005-09" db="EMBL/GenBank/DDBJ databases">
        <title>Annotation of the Aspergillus terreus NIH2624 genome.</title>
        <authorList>
            <person name="Birren B.W."/>
            <person name="Lander E.S."/>
            <person name="Galagan J.E."/>
            <person name="Nusbaum C."/>
            <person name="Devon K."/>
            <person name="Henn M."/>
            <person name="Ma L.-J."/>
            <person name="Jaffe D.B."/>
            <person name="Butler J."/>
            <person name="Alvarez P."/>
            <person name="Gnerre S."/>
            <person name="Grabherr M."/>
            <person name="Kleber M."/>
            <person name="Mauceli E.W."/>
            <person name="Brockman W."/>
            <person name="Rounsley S."/>
            <person name="Young S.K."/>
            <person name="LaButti K."/>
            <person name="Pushparaj V."/>
            <person name="DeCaprio D."/>
            <person name="Crawford M."/>
            <person name="Koehrsen M."/>
            <person name="Engels R."/>
            <person name="Montgomery P."/>
            <person name="Pearson M."/>
            <person name="Howarth C."/>
            <person name="Larson L."/>
            <person name="Luoma S."/>
            <person name="White J."/>
            <person name="Alvarado L."/>
            <person name="Kodira C.D."/>
            <person name="Zeng Q."/>
            <person name="Oleary S."/>
            <person name="Yandava C."/>
            <person name="Denning D.W."/>
            <person name="Nierman W.C."/>
            <person name="Milne T."/>
            <person name="Madden K."/>
        </authorList>
    </citation>
    <scope>NUCLEOTIDE SEQUENCE [LARGE SCALE GENOMIC DNA]</scope>
    <source>
        <strain>NIH 2624 / FGSC A1156</strain>
    </source>
</reference>
<keyword id="KW-0119">Carbohydrate metabolism</keyword>
<keyword id="KW-0325">Glycoprotein</keyword>
<keyword id="KW-0326">Glycosidase</keyword>
<keyword id="KW-0378">Hydrolase</keyword>
<keyword id="KW-0624">Polysaccharide degradation</keyword>
<keyword id="KW-1185">Reference proteome</keyword>
<keyword id="KW-0964">Secreted</keyword>
<keyword id="KW-0732">Signal</keyword>
<protein>
    <recommendedName>
        <fullName>Probable alpha-L-arabinofuranosidase C</fullName>
        <shortName>ABF C</shortName>
        <shortName>Arabinosidase C</shortName>
        <ecNumber>3.2.1.55</ecNumber>
    </recommendedName>
</protein>
<accession>Q0D1I6</accession>
<feature type="signal peptide" evidence="2">
    <location>
        <begin position="1"/>
        <end status="unknown"/>
    </location>
</feature>
<feature type="chain" id="PRO_0000394615" description="Probable alpha-L-arabinofuranosidase C">
    <location>
        <begin status="unknown"/>
        <end position="504"/>
    </location>
</feature>
<feature type="glycosylation site" description="N-linked (GlcNAc...) asparagine" evidence="2">
    <location>
        <position position="152"/>
    </location>
</feature>
<feature type="glycosylation site" description="N-linked (GlcNAc...) asparagine" evidence="2">
    <location>
        <position position="181"/>
    </location>
</feature>
<feature type="glycosylation site" description="N-linked (GlcNAc...) asparagine" evidence="2">
    <location>
        <position position="269"/>
    </location>
</feature>
<feature type="glycosylation site" description="N-linked (GlcNAc...) asparagine" evidence="2">
    <location>
        <position position="467"/>
    </location>
</feature>
<dbReference type="EC" id="3.2.1.55"/>
<dbReference type="EMBL" id="CH476594">
    <property type="protein sequence ID" value="EAU38844.1"/>
    <property type="molecule type" value="Genomic_DNA"/>
</dbReference>
<dbReference type="RefSeq" id="XP_001210284.1">
    <property type="nucleotide sequence ID" value="XM_001210284.1"/>
</dbReference>
<dbReference type="SMR" id="Q0D1I6"/>
<dbReference type="STRING" id="341663.Q0D1I6"/>
<dbReference type="GlyCosmos" id="Q0D1I6">
    <property type="glycosylation" value="4 sites, No reported glycans"/>
</dbReference>
<dbReference type="EnsemblFungi" id="EAU38844">
    <property type="protein sequence ID" value="EAU38844"/>
    <property type="gene ID" value="ATEG_00198"/>
</dbReference>
<dbReference type="GeneID" id="4354947"/>
<dbReference type="VEuPathDB" id="FungiDB:ATEG_00198"/>
<dbReference type="eggNOG" id="ENOG502QRW4">
    <property type="taxonomic scope" value="Eukaryota"/>
</dbReference>
<dbReference type="HOGENOM" id="CLU_017810_1_0_1"/>
<dbReference type="OMA" id="GETSPKW"/>
<dbReference type="OrthoDB" id="3032304at2759"/>
<dbReference type="UniPathway" id="UPA00667"/>
<dbReference type="Proteomes" id="UP000007963">
    <property type="component" value="Unassembled WGS sequence"/>
</dbReference>
<dbReference type="GO" id="GO:0005576">
    <property type="term" value="C:extracellular region"/>
    <property type="evidence" value="ECO:0007669"/>
    <property type="project" value="UniProtKB-SubCell"/>
</dbReference>
<dbReference type="GO" id="GO:0046556">
    <property type="term" value="F:alpha-L-arabinofuranosidase activity"/>
    <property type="evidence" value="ECO:0007669"/>
    <property type="project" value="UniProtKB-EC"/>
</dbReference>
<dbReference type="GO" id="GO:0031222">
    <property type="term" value="P:arabinan catabolic process"/>
    <property type="evidence" value="ECO:0007669"/>
    <property type="project" value="UniProtKB-UniPathway"/>
</dbReference>
<dbReference type="GO" id="GO:0046373">
    <property type="term" value="P:L-arabinose metabolic process"/>
    <property type="evidence" value="ECO:0007669"/>
    <property type="project" value="InterPro"/>
</dbReference>
<dbReference type="FunFam" id="3.20.20.80:FF:000110">
    <property type="entry name" value="Alpha-L-arabinofuranosidase C"/>
    <property type="match status" value="1"/>
</dbReference>
<dbReference type="Gene3D" id="3.20.20.80">
    <property type="entry name" value="Glycosidases"/>
    <property type="match status" value="1"/>
</dbReference>
<dbReference type="Gene3D" id="2.60.40.1180">
    <property type="entry name" value="Golgi alpha-mannosidase II"/>
    <property type="match status" value="1"/>
</dbReference>
<dbReference type="InterPro" id="IPR010720">
    <property type="entry name" value="Alpha-L-AF_C"/>
</dbReference>
<dbReference type="InterPro" id="IPR013780">
    <property type="entry name" value="Glyco_hydro_b"/>
</dbReference>
<dbReference type="InterPro" id="IPR017853">
    <property type="entry name" value="Glycoside_hydrolase_SF"/>
</dbReference>
<dbReference type="PANTHER" id="PTHR43576:SF3">
    <property type="entry name" value="ALPHA-L-ARABINOFURANOSIDASE C"/>
    <property type="match status" value="1"/>
</dbReference>
<dbReference type="PANTHER" id="PTHR43576">
    <property type="entry name" value="ALPHA-L-ARABINOFURANOSIDASE C-RELATED"/>
    <property type="match status" value="1"/>
</dbReference>
<dbReference type="Pfam" id="PF06964">
    <property type="entry name" value="Alpha-L-AF_C"/>
    <property type="match status" value="1"/>
</dbReference>
<dbReference type="SMART" id="SM00813">
    <property type="entry name" value="Alpha-L-AF_C"/>
    <property type="match status" value="1"/>
</dbReference>
<dbReference type="SUPFAM" id="SSF51445">
    <property type="entry name" value="(Trans)glycosidases"/>
    <property type="match status" value="1"/>
</dbReference>
<dbReference type="SUPFAM" id="SSF51011">
    <property type="entry name" value="Glycosyl hydrolase domain"/>
    <property type="match status" value="1"/>
</dbReference>
<comment type="function">
    <text evidence="1">Alpha-L-arabinofuranosidase involved in the degradation of arabinoxylan, a major component of plant hemicellulose. Acts only on small linear 1,5-alpha-linked L-arabinofuranosyl oligosaccharides (By similarity).</text>
</comment>
<comment type="catalytic activity">
    <reaction>
        <text>Hydrolysis of terminal non-reducing alpha-L-arabinofuranoside residues in alpha-L-arabinosides.</text>
        <dbReference type="EC" id="3.2.1.55"/>
    </reaction>
</comment>
<comment type="pathway">
    <text>Glycan metabolism; L-arabinan degradation.</text>
</comment>
<comment type="subcellular location">
    <subcellularLocation>
        <location evidence="1">Secreted</location>
    </subcellularLocation>
</comment>
<comment type="similarity">
    <text evidence="3">Belongs to the glycosyl hydrolase 51 family.</text>
</comment>
<evidence type="ECO:0000250" key="1"/>
<evidence type="ECO:0000255" key="2"/>
<evidence type="ECO:0000305" key="3"/>
<proteinExistence type="inferred from homology"/>
<gene>
    <name type="primary">abfC</name>
    <name type="ORF">ATEG_00198</name>
</gene>
<organism>
    <name type="scientific">Aspergillus terreus (strain NIH 2624 / FGSC A1156)</name>
    <dbReference type="NCBI Taxonomy" id="341663"/>
    <lineage>
        <taxon>Eukaryota</taxon>
        <taxon>Fungi</taxon>
        <taxon>Dikarya</taxon>
        <taxon>Ascomycota</taxon>
        <taxon>Pezizomycotina</taxon>
        <taxon>Eurotiomycetes</taxon>
        <taxon>Eurotiomycetidae</taxon>
        <taxon>Eurotiales</taxon>
        <taxon>Aspergillaceae</taxon>
        <taxon>Aspergillus</taxon>
        <taxon>Aspergillus subgen. Circumdati</taxon>
    </lineage>
</organism>